<dbReference type="EMBL" id="AYHN01140911">
    <property type="status" value="NOT_ANNOTATED_CDS"/>
    <property type="molecule type" value="Genomic_DNA"/>
</dbReference>
<dbReference type="SMR" id="P0DTV2"/>
<dbReference type="Proteomes" id="UP000504601">
    <property type="component" value="Unplaced"/>
</dbReference>
<dbReference type="Proteomes" id="UP000694547">
    <property type="component" value="Unplaced"/>
</dbReference>
<dbReference type="GO" id="GO:0042627">
    <property type="term" value="C:chylomicron"/>
    <property type="evidence" value="ECO:0007669"/>
    <property type="project" value="TreeGrafter"/>
</dbReference>
<dbReference type="GO" id="GO:1903561">
    <property type="term" value="C:extracellular vesicle"/>
    <property type="evidence" value="ECO:0007669"/>
    <property type="project" value="TreeGrafter"/>
</dbReference>
<dbReference type="GO" id="GO:0034364">
    <property type="term" value="C:high-density lipoprotein particle"/>
    <property type="evidence" value="ECO:0007669"/>
    <property type="project" value="UniProtKB-KW"/>
</dbReference>
<dbReference type="GO" id="GO:0034362">
    <property type="term" value="C:low-density lipoprotein particle"/>
    <property type="evidence" value="ECO:0007669"/>
    <property type="project" value="TreeGrafter"/>
</dbReference>
<dbReference type="GO" id="GO:0034361">
    <property type="term" value="C:very-low-density lipoprotein particle"/>
    <property type="evidence" value="ECO:0007669"/>
    <property type="project" value="TreeGrafter"/>
</dbReference>
<dbReference type="GO" id="GO:0120020">
    <property type="term" value="F:cholesterol transfer activity"/>
    <property type="evidence" value="ECO:0007669"/>
    <property type="project" value="TreeGrafter"/>
</dbReference>
<dbReference type="GO" id="GO:0060228">
    <property type="term" value="F:phosphatidylcholine-sterol O-acyltransferase activator activity"/>
    <property type="evidence" value="ECO:0007669"/>
    <property type="project" value="TreeGrafter"/>
</dbReference>
<dbReference type="GO" id="GO:0005543">
    <property type="term" value="F:phospholipid binding"/>
    <property type="evidence" value="ECO:0007669"/>
    <property type="project" value="TreeGrafter"/>
</dbReference>
<dbReference type="GO" id="GO:0042803">
    <property type="term" value="F:protein homodimerization activity"/>
    <property type="evidence" value="ECO:0000250"/>
    <property type="project" value="UniProtKB"/>
</dbReference>
<dbReference type="GO" id="GO:0055090">
    <property type="term" value="P:acylglycerol homeostasis"/>
    <property type="evidence" value="ECO:0007669"/>
    <property type="project" value="TreeGrafter"/>
</dbReference>
<dbReference type="GO" id="GO:0033344">
    <property type="term" value="P:cholesterol efflux"/>
    <property type="evidence" value="ECO:0007669"/>
    <property type="project" value="TreeGrafter"/>
</dbReference>
<dbReference type="GO" id="GO:0008203">
    <property type="term" value="P:cholesterol metabolic process"/>
    <property type="evidence" value="ECO:0007669"/>
    <property type="project" value="UniProtKB-KW"/>
</dbReference>
<dbReference type="GO" id="GO:0042157">
    <property type="term" value="P:lipoprotein metabolic process"/>
    <property type="evidence" value="ECO:0007669"/>
    <property type="project" value="InterPro"/>
</dbReference>
<dbReference type="GO" id="GO:0033700">
    <property type="term" value="P:phospholipid efflux"/>
    <property type="evidence" value="ECO:0007669"/>
    <property type="project" value="TreeGrafter"/>
</dbReference>
<dbReference type="FunFam" id="1.20.120.20:FF:000001">
    <property type="entry name" value="Apolipoprotein A-I"/>
    <property type="match status" value="1"/>
</dbReference>
<dbReference type="FunFam" id="1.20.5.20:FF:000001">
    <property type="entry name" value="apolipoprotein A-I"/>
    <property type="match status" value="1"/>
</dbReference>
<dbReference type="Gene3D" id="1.20.5.20">
    <property type="match status" value="1"/>
</dbReference>
<dbReference type="Gene3D" id="6.10.140.380">
    <property type="match status" value="1"/>
</dbReference>
<dbReference type="Gene3D" id="1.20.120.20">
    <property type="entry name" value="Apolipoprotein"/>
    <property type="match status" value="1"/>
</dbReference>
<dbReference type="InterPro" id="IPR000074">
    <property type="entry name" value="ApoA_E"/>
</dbReference>
<dbReference type="InterPro" id="IPR050163">
    <property type="entry name" value="Apolipoprotein_A1/A4/E"/>
</dbReference>
<dbReference type="PANTHER" id="PTHR18976">
    <property type="entry name" value="APOLIPOPROTEIN"/>
    <property type="match status" value="1"/>
</dbReference>
<dbReference type="PANTHER" id="PTHR18976:SF11">
    <property type="entry name" value="APOLIPOPROTEIN A-I"/>
    <property type="match status" value="1"/>
</dbReference>
<dbReference type="Pfam" id="PF01442">
    <property type="entry name" value="Apolipoprotein"/>
    <property type="match status" value="1"/>
</dbReference>
<dbReference type="SUPFAM" id="SSF58113">
    <property type="entry name" value="Apolipoprotein A-I"/>
    <property type="match status" value="1"/>
</dbReference>
<feature type="signal peptide" evidence="7">
    <location>
        <begin position="1"/>
        <end position="18"/>
    </location>
</feature>
<feature type="chain" id="PRO_0000450156" description="Proapolipoprotein A-I">
    <location>
        <begin position="19"/>
        <end position="264"/>
    </location>
</feature>
<feature type="chain" id="PRO_0000450157" description="Apolipoprotein A-I">
    <location>
        <begin position="25"/>
        <end position="264"/>
    </location>
</feature>
<feature type="chain" id="PRO_0000450158" description="Truncated apolipoprotein A-I" evidence="3">
    <location>
        <begin position="25"/>
        <end position="263"/>
    </location>
</feature>
<feature type="repeat" description="1">
    <location>
        <begin position="67"/>
        <end position="88"/>
    </location>
</feature>
<feature type="repeat" description="2">
    <location>
        <begin position="89"/>
        <end position="110"/>
    </location>
</feature>
<feature type="repeat" description="3; half-length">
    <location>
        <begin position="111"/>
        <end position="121"/>
    </location>
</feature>
<feature type="repeat" description="4">
    <location>
        <begin position="122"/>
        <end position="143"/>
    </location>
</feature>
<feature type="repeat" description="5">
    <location>
        <begin position="144"/>
        <end position="165"/>
    </location>
</feature>
<feature type="repeat" description="6">
    <location>
        <begin position="166"/>
        <end position="187"/>
    </location>
</feature>
<feature type="repeat" description="7; truncated">
    <location>
        <begin position="188"/>
        <end position="207"/>
    </location>
</feature>
<feature type="repeat" description="8">
    <location>
        <begin position="208"/>
        <end position="229"/>
    </location>
</feature>
<feature type="repeat" description="9; half-length">
    <location>
        <begin position="230"/>
        <end position="240"/>
    </location>
</feature>
<feature type="repeat" description="10">
    <location>
        <begin position="241"/>
        <end position="264"/>
    </location>
</feature>
<feature type="region of interest" description="10 X approximate tandem repeats">
    <location>
        <begin position="67"/>
        <end position="264"/>
    </location>
</feature>
<feature type="modified residue" description="Methionine sulfoxide" evidence="3">
    <location>
        <position position="109"/>
    </location>
</feature>
<feature type="modified residue" description="Methionine sulfoxide" evidence="6">
    <location>
        <position position="193"/>
    </location>
</feature>
<feature type="modified residue" description="Methionine sulfoxide" evidence="6">
    <location>
        <position position="242"/>
    </location>
</feature>
<accession>P0DTV2</accession>
<comment type="function">
    <text evidence="3">Participates in the reverse transport of cholesterol from tissues to the liver for excretion by promoting cholesterol efflux from tissues and by acting as a cofactor for the lecithin cholesterol acyltransferase (LCAT). As part of the SPAP complex, activates spermatozoa motility.</text>
</comment>
<comment type="subunit">
    <text evidence="2 3 5">Homodimer (By similarity). Interacts with APOA1BP and CLU. Component of a sperm activating protein complex (SPAP), consisting of APOA1, an immunoglobulin heavy chain, an immunoglobulin light chain and albumin. Interacts with NDRG1. Interacts with SCGB3A2 (By similarity). Interacts with NAXE and YJEFN3 (By similarity).</text>
</comment>
<comment type="subcellular location">
    <subcellularLocation>
        <location evidence="3">Secreted</location>
    </subcellularLocation>
</comment>
<comment type="PTM">
    <text evidence="4">Glycosylated.</text>
</comment>
<comment type="PTM">
    <text evidence="4">Palmitoylated.</text>
</comment>
<comment type="PTM">
    <text evidence="1">Phosphorylation sites are present in the extracellular medium.</text>
</comment>
<comment type="similarity">
    <text evidence="8">Belongs to the apolipoprotein A1/A4/E family.</text>
</comment>
<keyword id="KW-0153">Cholesterol metabolism</keyword>
<keyword id="KW-0325">Glycoprotein</keyword>
<keyword id="KW-0345">HDL</keyword>
<keyword id="KW-0443">Lipid metabolism</keyword>
<keyword id="KW-0445">Lipid transport</keyword>
<keyword id="KW-0449">Lipoprotein</keyword>
<keyword id="KW-0558">Oxidation</keyword>
<keyword id="KW-0564">Palmitate</keyword>
<keyword id="KW-0597">Phosphoprotein</keyword>
<keyword id="KW-1185">Reference proteome</keyword>
<keyword id="KW-0677">Repeat</keyword>
<keyword id="KW-0964">Secreted</keyword>
<keyword id="KW-0732">Signal</keyword>
<keyword id="KW-0753">Steroid metabolism</keyword>
<keyword id="KW-1207">Sterol metabolism</keyword>
<keyword id="KW-0813">Transport</keyword>
<name>APOA1_PERMB</name>
<reference key="1">
    <citation type="submission" date="2013-10" db="EMBL/GenBank/DDBJ databases">
        <authorList>
            <person name="Liu Y."/>
            <person name="Aqrawi P."/>
            <person name="Bandaranaike D."/>
            <person name="Bellair M."/>
            <person name="Blankenburg K."/>
            <person name="Chao H."/>
            <person name="Coyle M."/>
            <person name="Davila M.L."/>
            <person name="Dinh H."/>
            <person name="Dinh N."/>
            <person name="Doddapaneni H."/>
            <person name="Downs B."/>
            <person name="Dugan-Rocha S."/>
            <person name="Elkadiri S."/>
            <person name="Fernando P."/>
            <person name="Francisco L."/>
            <person name="Garrett T."/>
            <person name="Gnanaolivu R."/>
            <person name="Goodspeed R."/>
            <person name="Gross S."/>
            <person name="Hernandez B."/>
            <person name="Jackson L."/>
            <person name="Javaid M."/>
            <person name="Jayaseelan J.C."/>
            <person name="Jhangiani S."/>
            <person name="Johnson B."/>
            <person name="Joshi V."/>
            <person name="Kalu J."/>
            <person name="Khan N."/>
            <person name="Korchina V."/>
            <person name="Kovar C."/>
            <person name="Leal B."/>
            <person name="Lee S."/>
            <person name="Li M."/>
            <person name="Mandapat C."/>
            <person name="Mata R."/>
            <person name="Matakis S."/>
            <person name="Mathew T."/>
            <person name="Ming W."/>
            <person name="Munidasa M."/>
            <person name="Muniz J."/>
            <person name="Narasimhan A."/>
            <person name="Nazareth L."/>
            <person name="Newsham I."/>
            <person name="Ng B."/>
            <person name="Nguyen L."/>
            <person name="Obregon M."/>
            <person name="Okwuonu G."/>
            <person name="Ongeri F."/>
            <person name="Onwere C."/>
            <person name="Osuji N."/>
            <person name="Perez A."/>
            <person name="Pham C."/>
            <person name="Pu L.L."/>
            <person name="Puazo M."/>
            <person name="Qu C."/>
            <person name="Quiroz J."/>
            <person name="Raj R."/>
            <person name="Rajbhandari K."/>
            <person name="Ruiz S.J."/>
            <person name="Saada N."/>
            <person name="Santibanez J."/>
            <person name="Scheel M."/>
            <person name="Sisson I."/>
            <person name="Thornton R."/>
            <person name="Trejos Z."/>
            <person name="Vee V."/>
            <person name="Walker D."/>
            <person name="Warner C."/>
            <person name="Weissenberger G."/>
            <person name="Williams A."/>
            <person name="Wright R."/>
            <person name="Wu Y."/>
            <person name="Xin Y."/>
            <person name="Zou X."/>
            <person name="Han Y."/>
            <person name="Worley K."/>
            <person name="Muzny D."/>
            <person name="Gibbs R."/>
        </authorList>
    </citation>
    <scope>NUCLEOTIDE SEQUENCE [LARGE SCALE GENOMIC DNA]</scope>
</reference>
<reference key="2">
    <citation type="unpublished observations" date="2020-03">
        <authorList>
            <person name="Puppione D.L."/>
        </authorList>
    </citation>
    <scope>IDENTIFICATION</scope>
</reference>
<sequence length="264" mass="30597">MKAVVLAVAVLFLTGSQARHFWQQDDPQTSWDRVKDFATVYVDAIKDSGRDYVSQFESSALGQQLNLKLVDNWDTVGTTVGRLQEQLGPVTQEFWSNLEKDTDWLREEMNKDLEEVKKQVQPYLDQFQTKWQEEMEHYRQKVGPLGAELREGARQKLQDLQERLVPVGEDIRDRMRTHVDALRSNLSPYSDKMRERLAQHLAKLKDSTTLAEYRTKASNHLQTLSEKAKPALEDLRQGLTPMLESFRATIMGWIDETSKRLSTQ</sequence>
<organism>
    <name type="scientific">Peromyscus maniculatus bairdii</name>
    <name type="common">Prairie deer mouse</name>
    <dbReference type="NCBI Taxonomy" id="230844"/>
    <lineage>
        <taxon>Eukaryota</taxon>
        <taxon>Metazoa</taxon>
        <taxon>Chordata</taxon>
        <taxon>Craniata</taxon>
        <taxon>Vertebrata</taxon>
        <taxon>Euteleostomi</taxon>
        <taxon>Mammalia</taxon>
        <taxon>Eutheria</taxon>
        <taxon>Euarchontoglires</taxon>
        <taxon>Glires</taxon>
        <taxon>Rodentia</taxon>
        <taxon>Myomorpha</taxon>
        <taxon>Muroidea</taxon>
        <taxon>Cricetidae</taxon>
        <taxon>Neotominae</taxon>
        <taxon>Peromyscus</taxon>
    </lineage>
</organism>
<proteinExistence type="inferred from homology"/>
<protein>
    <recommendedName>
        <fullName>Apolipoprotein A-I</fullName>
        <shortName>Apo-AI</shortName>
        <shortName>ApoA-I</shortName>
    </recommendedName>
    <alternativeName>
        <fullName>Apolipoprotein A1</fullName>
    </alternativeName>
    <component>
        <recommendedName>
            <fullName>Proapolipoprotein A-I</fullName>
            <shortName>ProapoA-I</shortName>
        </recommendedName>
    </component>
    <component>
        <recommendedName>
            <fullName>Truncated apolipoprotein A-I</fullName>
        </recommendedName>
    </component>
</protein>
<gene>
    <name type="primary">Apoa1</name>
</gene>
<evidence type="ECO:0000250" key="1"/>
<evidence type="ECO:0000250" key="2">
    <source>
        <dbReference type="UniProtKB" id="G5BQH5"/>
    </source>
</evidence>
<evidence type="ECO:0000250" key="3">
    <source>
        <dbReference type="UniProtKB" id="P02647"/>
    </source>
</evidence>
<evidence type="ECO:0000250" key="4">
    <source>
        <dbReference type="UniProtKB" id="P02648"/>
    </source>
</evidence>
<evidence type="ECO:0000250" key="5">
    <source>
        <dbReference type="UniProtKB" id="P04639"/>
    </source>
</evidence>
<evidence type="ECO:0000250" key="6">
    <source>
        <dbReference type="UniProtKB" id="Q00623"/>
    </source>
</evidence>
<evidence type="ECO:0000255" key="7"/>
<evidence type="ECO:0000305" key="8"/>